<name>CD1D_RAT</name>
<accession>Q63493</accession>
<gene>
    <name type="primary">Cd1d</name>
    <name type="synonym">Cd1d1</name>
</gene>
<feature type="signal peptide" evidence="3">
    <location>
        <begin position="1"/>
        <end position="17"/>
    </location>
</feature>
<feature type="chain" id="PRO_0000014595" description="Antigen-presenting glycoprotein CD1d">
    <location>
        <begin position="18"/>
        <end position="336"/>
    </location>
</feature>
<feature type="topological domain" description="Extracellular" evidence="3">
    <location>
        <begin position="18"/>
        <end position="304"/>
    </location>
</feature>
<feature type="transmembrane region" description="Helical" evidence="3">
    <location>
        <begin position="305"/>
        <end position="325"/>
    </location>
</feature>
<feature type="topological domain" description="Cytoplasmic" evidence="3">
    <location>
        <begin position="326"/>
        <end position="336"/>
    </location>
</feature>
<feature type="domain" description="Ig-like">
    <location>
        <begin position="198"/>
        <end position="296"/>
    </location>
</feature>
<feature type="short sequence motif" description="Internalization signal" evidence="1">
    <location>
        <begin position="332"/>
        <end position="335"/>
    </location>
</feature>
<feature type="binding site" evidence="2">
    <location>
        <position position="97"/>
    </location>
    <ligand>
        <name>a D-galactosylceramide</name>
        <dbReference type="ChEBI" id="CHEBI:36498"/>
    </ligand>
</feature>
<feature type="binding site" evidence="2">
    <location>
        <begin position="170"/>
        <end position="173"/>
    </location>
    <ligand>
        <name>a D-galactosylceramide</name>
        <dbReference type="ChEBI" id="CHEBI:36498"/>
    </ligand>
</feature>
<feature type="binding site" evidence="1">
    <location>
        <position position="170"/>
    </location>
    <ligand>
        <name>a D-galactosylceramide</name>
        <dbReference type="ChEBI" id="CHEBI:36498"/>
    </ligand>
</feature>
<feature type="binding site" evidence="1">
    <location>
        <position position="173"/>
    </location>
    <ligand>
        <name>a D-galactosylceramide</name>
        <dbReference type="ChEBI" id="CHEBI:36498"/>
    </ligand>
</feature>
<feature type="glycosylation site" description="N-linked (GlcNAc...) asparagine" evidence="3">
    <location>
        <position position="24"/>
    </location>
</feature>
<feature type="glycosylation site" description="N-linked (GlcNAc...) asparagine" evidence="3">
    <location>
        <position position="37"/>
    </location>
</feature>
<feature type="glycosylation site" description="N-linked (GlcNAc...) asparagine" evidence="3">
    <location>
        <position position="59"/>
    </location>
</feature>
<feature type="glycosylation site" description="N-linked (GlcNAc...) asparagine" evidence="3">
    <location>
        <position position="127"/>
    </location>
</feature>
<feature type="glycosylation site" description="N-linked (GlcNAc...) asparagine" evidence="3">
    <location>
        <position position="182"/>
    </location>
</feature>
<feature type="disulfide bond" evidence="4">
    <location>
        <begin position="121"/>
        <end position="185"/>
    </location>
</feature>
<feature type="disulfide bond" evidence="4">
    <location>
        <begin position="225"/>
        <end position="280"/>
    </location>
</feature>
<protein>
    <recommendedName>
        <fullName>Antigen-presenting glycoprotein CD1d</fullName>
    </recommendedName>
    <cdAntigenName>CD1d</cdAntigenName>
</protein>
<comment type="function">
    <text evidence="1">Antigen-presenting protein that binds self and non-self glycolipids and presents them to T-cell receptors on natural killer T-cells.</text>
</comment>
<comment type="subunit">
    <text evidence="1">Heterodimer with B2M (beta-2-microglobulin). Interacts with MHC II and CD74 (By similarity).</text>
</comment>
<comment type="subcellular location">
    <subcellularLocation>
        <location evidence="2">Cell membrane</location>
        <topology evidence="2">Single-pass type I membrane protein</topology>
    </subcellularLocation>
    <subcellularLocation>
        <location evidence="2">Basolateral cell membrane</location>
        <topology evidence="2">Single-pass type I membrane protein</topology>
    </subcellularLocation>
    <subcellularLocation>
        <location evidence="2">Endosome membrane</location>
        <topology evidence="2">Single-pass type I membrane protein</topology>
    </subcellularLocation>
    <subcellularLocation>
        <location evidence="2">Lysosome membrane</location>
        <topology evidence="2">Single-pass type I membrane protein</topology>
    </subcellularLocation>
    <subcellularLocation>
        <location evidence="2">Endoplasmic reticulum membrane</location>
        <topology evidence="2">Single-pass type I membrane protein</topology>
    </subcellularLocation>
    <text evidence="2">Subject to intracellular trafficking between the cell membrane, endosomes and lysosomes.</text>
</comment>
<comment type="miscellaneous">
    <text evidence="1">During protein synthesis and maturation, CD1 family members bind endogenous lipids that are replaced by lipid or glycolipid antigens when the proteins are internalized and pass through endosomes, before trafficking back to the cell surface.</text>
</comment>
<proteinExistence type="evidence at transcript level"/>
<evidence type="ECO:0000250" key="1"/>
<evidence type="ECO:0000250" key="2">
    <source>
        <dbReference type="UniProtKB" id="P15813"/>
    </source>
</evidence>
<evidence type="ECO:0000255" key="3"/>
<evidence type="ECO:0000255" key="4">
    <source>
        <dbReference type="PROSITE-ProRule" id="PRU00114"/>
    </source>
</evidence>
<organism>
    <name type="scientific">Rattus norvegicus</name>
    <name type="common">Rat</name>
    <dbReference type="NCBI Taxonomy" id="10116"/>
    <lineage>
        <taxon>Eukaryota</taxon>
        <taxon>Metazoa</taxon>
        <taxon>Chordata</taxon>
        <taxon>Craniata</taxon>
        <taxon>Vertebrata</taxon>
        <taxon>Euteleostomi</taxon>
        <taxon>Mammalia</taxon>
        <taxon>Eutheria</taxon>
        <taxon>Euarchontoglires</taxon>
        <taxon>Glires</taxon>
        <taxon>Rodentia</taxon>
        <taxon>Myomorpha</taxon>
        <taxon>Muroidea</taxon>
        <taxon>Muridae</taxon>
        <taxon>Murinae</taxon>
        <taxon>Rattus</taxon>
    </lineage>
</organism>
<sequence>MLYLPCLLLWAFPQFWGQSEVQQNYTFGCLQISSFANRSWSRTDSVVWLGDLQTHRWSNDSDTISFTKPWSQGKFSNQQWEKLQHMFQVYRTSFTRDIKEIVKMMSPKEDYPIEVQLSAGCEMYPGNASESFLHVAFQGEYVVRFHGTSWQKVPEAPSWLDLPIKMLNADEGTRETVQILLNDTCPQFVRGLLEAGKPDLEKQEKPVAWLSRGPNPAHGHLQLVCHVSGFHPKPVWVMWMRGDQEQGGTHRGDILPNADETWYLQATLDVEAGDEAGLACRVKHSSLEGQDIILYWGGRQVSPVLIFLIVGVLVLVVCAVAYYIIRKRRRSYQDIM</sequence>
<reference key="1">
    <citation type="journal article" date="1994" name="J. Immunol.">
        <title>Structural analysis of the rat homologue of CD1. Evidence for evolutionary conservation of the CD1D class and widespread transcription by rat cells.</title>
        <authorList>
            <person name="Ichimiya S."/>
            <person name="Kikuchi K."/>
            <person name="Matsuura A."/>
        </authorList>
    </citation>
    <scope>NUCLEOTIDE SEQUENCE [MRNA]</scope>
    <source>
        <tissue>Lymphoma</tissue>
    </source>
</reference>
<reference key="2">
    <citation type="journal article" date="1998" name="Immunogenetics">
        <title>Structural organization of rat CD1 typifies evolutionarily conserved CD1D class genes.</title>
        <authorList>
            <person name="Katabami S."/>
            <person name="Matsuura A."/>
            <person name="Chen H."/>
            <person name="Imai K."/>
            <person name="Kikuchi K."/>
        </authorList>
    </citation>
    <scope>NUCLEOTIDE SEQUENCE [MRNA]</scope>
    <source>
        <tissue>Lymphoma</tissue>
    </source>
</reference>
<keyword id="KW-1003">Cell membrane</keyword>
<keyword id="KW-1015">Disulfide bond</keyword>
<keyword id="KW-0256">Endoplasmic reticulum</keyword>
<keyword id="KW-0967">Endosome</keyword>
<keyword id="KW-0325">Glycoprotein</keyword>
<keyword id="KW-0391">Immunity</keyword>
<keyword id="KW-0393">Immunoglobulin domain</keyword>
<keyword id="KW-0399">Innate immunity</keyword>
<keyword id="KW-0458">Lysosome</keyword>
<keyword id="KW-0472">Membrane</keyword>
<keyword id="KW-1185">Reference proteome</keyword>
<keyword id="KW-0732">Signal</keyword>
<keyword id="KW-0812">Transmembrane</keyword>
<keyword id="KW-1133">Transmembrane helix</keyword>
<dbReference type="EMBL" id="D26439">
    <property type="protein sequence ID" value="BAA05455.2"/>
    <property type="molecule type" value="mRNA"/>
</dbReference>
<dbReference type="PIR" id="I56235">
    <property type="entry name" value="I56235"/>
</dbReference>
<dbReference type="RefSeq" id="NP_058775.1">
    <property type="nucleotide sequence ID" value="NM_017079.1"/>
</dbReference>
<dbReference type="SMR" id="Q63493"/>
<dbReference type="FunCoup" id="Q63493">
    <property type="interactions" value="234"/>
</dbReference>
<dbReference type="STRING" id="10116.ENSRNOP00000022150"/>
<dbReference type="GlyCosmos" id="Q63493">
    <property type="glycosylation" value="5 sites, No reported glycans"/>
</dbReference>
<dbReference type="GlyGen" id="Q63493">
    <property type="glycosylation" value="5 sites"/>
</dbReference>
<dbReference type="iPTMnet" id="Q63493"/>
<dbReference type="PhosphoSitePlus" id="Q63493"/>
<dbReference type="SwissPalm" id="Q63493"/>
<dbReference type="PaxDb" id="10116-ENSRNOP00000022150"/>
<dbReference type="GeneID" id="25109"/>
<dbReference type="KEGG" id="rno:25109"/>
<dbReference type="UCSC" id="RGD:2296">
    <property type="organism name" value="rat"/>
</dbReference>
<dbReference type="AGR" id="RGD:2296"/>
<dbReference type="CTD" id="12479"/>
<dbReference type="RGD" id="2296">
    <property type="gene designation" value="Cd1d1"/>
</dbReference>
<dbReference type="eggNOG" id="ENOG502SJH6">
    <property type="taxonomic scope" value="Eukaryota"/>
</dbReference>
<dbReference type="InParanoid" id="Q63493"/>
<dbReference type="OrthoDB" id="49773at9989"/>
<dbReference type="PhylomeDB" id="Q63493"/>
<dbReference type="Reactome" id="R-RNO-198933">
    <property type="pathway name" value="Immunoregulatory interactions between a Lymphoid and a non-Lymphoid cell"/>
</dbReference>
<dbReference type="PRO" id="PR:Q63493"/>
<dbReference type="Proteomes" id="UP000002494">
    <property type="component" value="Unplaced"/>
</dbReference>
<dbReference type="GO" id="GO:0016323">
    <property type="term" value="C:basolateral plasma membrane"/>
    <property type="evidence" value="ECO:0007669"/>
    <property type="project" value="UniProtKB-SubCell"/>
</dbReference>
<dbReference type="GO" id="GO:0009986">
    <property type="term" value="C:cell surface"/>
    <property type="evidence" value="ECO:0000266"/>
    <property type="project" value="RGD"/>
</dbReference>
<dbReference type="GO" id="GO:0005737">
    <property type="term" value="C:cytoplasm"/>
    <property type="evidence" value="ECO:0000266"/>
    <property type="project" value="RGD"/>
</dbReference>
<dbReference type="GO" id="GO:0005769">
    <property type="term" value="C:early endosome"/>
    <property type="evidence" value="ECO:0000266"/>
    <property type="project" value="RGD"/>
</dbReference>
<dbReference type="GO" id="GO:0005789">
    <property type="term" value="C:endoplasmic reticulum membrane"/>
    <property type="evidence" value="ECO:0007669"/>
    <property type="project" value="UniProtKB-SubCell"/>
</dbReference>
<dbReference type="GO" id="GO:0010008">
    <property type="term" value="C:endosome membrane"/>
    <property type="evidence" value="ECO:0007669"/>
    <property type="project" value="UniProtKB-SubCell"/>
</dbReference>
<dbReference type="GO" id="GO:0009897">
    <property type="term" value="C:external side of plasma membrane"/>
    <property type="evidence" value="ECO:0000266"/>
    <property type="project" value="RGD"/>
</dbReference>
<dbReference type="GO" id="GO:0005615">
    <property type="term" value="C:extracellular space"/>
    <property type="evidence" value="ECO:0000318"/>
    <property type="project" value="GO_Central"/>
</dbReference>
<dbReference type="GO" id="GO:0005770">
    <property type="term" value="C:late endosome"/>
    <property type="evidence" value="ECO:0000266"/>
    <property type="project" value="RGD"/>
</dbReference>
<dbReference type="GO" id="GO:0005765">
    <property type="term" value="C:lysosomal membrane"/>
    <property type="evidence" value="ECO:0007669"/>
    <property type="project" value="UniProtKB-SubCell"/>
</dbReference>
<dbReference type="GO" id="GO:0005764">
    <property type="term" value="C:lysosome"/>
    <property type="evidence" value="ECO:0000250"/>
    <property type="project" value="UniProtKB"/>
</dbReference>
<dbReference type="GO" id="GO:0050839">
    <property type="term" value="F:cell adhesion molecule binding"/>
    <property type="evidence" value="ECO:0000266"/>
    <property type="project" value="RGD"/>
</dbReference>
<dbReference type="GO" id="GO:0030883">
    <property type="term" value="F:endogenous lipid antigen binding"/>
    <property type="evidence" value="ECO:0000266"/>
    <property type="project" value="RGD"/>
</dbReference>
<dbReference type="GO" id="GO:0030884">
    <property type="term" value="F:exogenous lipid antigen binding"/>
    <property type="evidence" value="ECO:0000266"/>
    <property type="project" value="RGD"/>
</dbReference>
<dbReference type="GO" id="GO:0030882">
    <property type="term" value="F:lipid antigen binding"/>
    <property type="evidence" value="ECO:0000250"/>
    <property type="project" value="UniProtKB"/>
</dbReference>
<dbReference type="GO" id="GO:0071723">
    <property type="term" value="F:lipopeptide binding"/>
    <property type="evidence" value="ECO:0000318"/>
    <property type="project" value="GO_Central"/>
</dbReference>
<dbReference type="GO" id="GO:0042608">
    <property type="term" value="F:T cell receptor binding"/>
    <property type="evidence" value="ECO:0000266"/>
    <property type="project" value="RGD"/>
</dbReference>
<dbReference type="GO" id="GO:0019882">
    <property type="term" value="P:antigen processing and presentation"/>
    <property type="evidence" value="ECO:0000266"/>
    <property type="project" value="RGD"/>
</dbReference>
<dbReference type="GO" id="GO:0048006">
    <property type="term" value="P:antigen processing and presentation, endogenous lipid antigen via MHC class Ib"/>
    <property type="evidence" value="ECO:0000266"/>
    <property type="project" value="RGD"/>
</dbReference>
<dbReference type="GO" id="GO:0048007">
    <property type="term" value="P:antigen processing and presentation, exogenous lipid antigen via MHC class Ib"/>
    <property type="evidence" value="ECO:0000266"/>
    <property type="project" value="RGD"/>
</dbReference>
<dbReference type="GO" id="GO:0006955">
    <property type="term" value="P:immune response"/>
    <property type="evidence" value="ECO:0000318"/>
    <property type="project" value="GO_Central"/>
</dbReference>
<dbReference type="GO" id="GO:0045087">
    <property type="term" value="P:innate immune response"/>
    <property type="evidence" value="ECO:0007669"/>
    <property type="project" value="UniProtKB-KW"/>
</dbReference>
<dbReference type="GO" id="GO:0001865">
    <property type="term" value="P:NK T cell differentiation"/>
    <property type="evidence" value="ECO:0000266"/>
    <property type="project" value="RGD"/>
</dbReference>
<dbReference type="GO" id="GO:0032743">
    <property type="term" value="P:positive regulation of interleukin-2 production"/>
    <property type="evidence" value="ECO:0000266"/>
    <property type="project" value="RGD"/>
</dbReference>
<dbReference type="GO" id="GO:0032753">
    <property type="term" value="P:positive regulation of interleukin-4 production"/>
    <property type="evidence" value="ECO:0000266"/>
    <property type="project" value="RGD"/>
</dbReference>
<dbReference type="GO" id="GO:0043032">
    <property type="term" value="P:positive regulation of macrophage activation"/>
    <property type="evidence" value="ECO:0000266"/>
    <property type="project" value="RGD"/>
</dbReference>
<dbReference type="GO" id="GO:0051135">
    <property type="term" value="P:positive regulation of NK T cell activation"/>
    <property type="evidence" value="ECO:0000266"/>
    <property type="project" value="RGD"/>
</dbReference>
<dbReference type="GO" id="GO:0051138">
    <property type="term" value="P:positive regulation of NK T cell differentiation"/>
    <property type="evidence" value="ECO:0000266"/>
    <property type="project" value="RGD"/>
</dbReference>
<dbReference type="GO" id="GO:0001916">
    <property type="term" value="P:positive regulation of T cell mediated cytotoxicity"/>
    <property type="evidence" value="ECO:0000266"/>
    <property type="project" value="RGD"/>
</dbReference>
<dbReference type="GO" id="GO:0042102">
    <property type="term" value="P:positive regulation of T cell proliferation"/>
    <property type="evidence" value="ECO:0000266"/>
    <property type="project" value="RGD"/>
</dbReference>
<dbReference type="GO" id="GO:0032729">
    <property type="term" value="P:positive regulation of type II interferon production"/>
    <property type="evidence" value="ECO:0000266"/>
    <property type="project" value="RGD"/>
</dbReference>
<dbReference type="GO" id="GO:0045059">
    <property type="term" value="P:positive thymic T cell selection"/>
    <property type="evidence" value="ECO:0000266"/>
    <property type="project" value="RGD"/>
</dbReference>
<dbReference type="GO" id="GO:0033084">
    <property type="term" value="P:regulation of immature T cell proliferation in thymus"/>
    <property type="evidence" value="ECO:0000266"/>
    <property type="project" value="RGD"/>
</dbReference>
<dbReference type="GO" id="GO:0050776">
    <property type="term" value="P:regulation of immune response"/>
    <property type="evidence" value="ECO:0000266"/>
    <property type="project" value="RGD"/>
</dbReference>
<dbReference type="CDD" id="cd21029">
    <property type="entry name" value="IgC1_CD1"/>
    <property type="match status" value="1"/>
</dbReference>
<dbReference type="FunFam" id="2.60.40.10:FF:000254">
    <property type="entry name" value="Antigen-presenting glycoprotein CD1d1"/>
    <property type="match status" value="1"/>
</dbReference>
<dbReference type="FunFam" id="3.30.500.10:FF:000002">
    <property type="entry name" value="Antigen-presenting glycoprotein CD1d1"/>
    <property type="match status" value="1"/>
</dbReference>
<dbReference type="Gene3D" id="2.60.40.10">
    <property type="entry name" value="Immunoglobulins"/>
    <property type="match status" value="1"/>
</dbReference>
<dbReference type="Gene3D" id="3.30.500.10">
    <property type="entry name" value="MHC class I-like antigen recognition-like"/>
    <property type="match status" value="1"/>
</dbReference>
<dbReference type="InterPro" id="IPR007110">
    <property type="entry name" value="Ig-like_dom"/>
</dbReference>
<dbReference type="InterPro" id="IPR036179">
    <property type="entry name" value="Ig-like_dom_sf"/>
</dbReference>
<dbReference type="InterPro" id="IPR013783">
    <property type="entry name" value="Ig-like_fold"/>
</dbReference>
<dbReference type="InterPro" id="IPR003597">
    <property type="entry name" value="Ig_C1-set"/>
</dbReference>
<dbReference type="InterPro" id="IPR050208">
    <property type="entry name" value="MHC_class-I_related"/>
</dbReference>
<dbReference type="InterPro" id="IPR011161">
    <property type="entry name" value="MHC_I-like_Ag-recog"/>
</dbReference>
<dbReference type="InterPro" id="IPR037055">
    <property type="entry name" value="MHC_I-like_Ag-recog_sf"/>
</dbReference>
<dbReference type="InterPro" id="IPR011162">
    <property type="entry name" value="MHC_I/II-like_Ag-recog"/>
</dbReference>
<dbReference type="PANTHER" id="PTHR16675:SF175">
    <property type="entry name" value="ANTIGEN-PRESENTING GLYCOPROTEIN CD1D"/>
    <property type="match status" value="1"/>
</dbReference>
<dbReference type="PANTHER" id="PTHR16675">
    <property type="entry name" value="MHC CLASS I-RELATED"/>
    <property type="match status" value="1"/>
</dbReference>
<dbReference type="Pfam" id="PF07654">
    <property type="entry name" value="C1-set"/>
    <property type="match status" value="1"/>
</dbReference>
<dbReference type="Pfam" id="PF16497">
    <property type="entry name" value="MHC_I_3"/>
    <property type="match status" value="1"/>
</dbReference>
<dbReference type="SMART" id="SM00407">
    <property type="entry name" value="IGc1"/>
    <property type="match status" value="1"/>
</dbReference>
<dbReference type="SUPFAM" id="SSF48726">
    <property type="entry name" value="Immunoglobulin"/>
    <property type="match status" value="1"/>
</dbReference>
<dbReference type="SUPFAM" id="SSF54452">
    <property type="entry name" value="MHC antigen-recognition domain"/>
    <property type="match status" value="1"/>
</dbReference>
<dbReference type="PROSITE" id="PS50835">
    <property type="entry name" value="IG_LIKE"/>
    <property type="match status" value="1"/>
</dbReference>